<proteinExistence type="inferred from homology"/>
<comment type="function">
    <text evidence="1">Catalyzes the formation of S-adenosylmethionine (AdoMet) from methionine and ATP. The overall synthetic reaction is composed of two sequential steps, AdoMet formation and the subsequent tripolyphosphate hydrolysis which occurs prior to release of AdoMet from the enzyme.</text>
</comment>
<comment type="catalytic activity">
    <reaction evidence="1">
        <text>L-methionine + ATP + H2O = S-adenosyl-L-methionine + phosphate + diphosphate</text>
        <dbReference type="Rhea" id="RHEA:21080"/>
        <dbReference type="ChEBI" id="CHEBI:15377"/>
        <dbReference type="ChEBI" id="CHEBI:30616"/>
        <dbReference type="ChEBI" id="CHEBI:33019"/>
        <dbReference type="ChEBI" id="CHEBI:43474"/>
        <dbReference type="ChEBI" id="CHEBI:57844"/>
        <dbReference type="ChEBI" id="CHEBI:59789"/>
        <dbReference type="EC" id="2.5.1.6"/>
    </reaction>
</comment>
<comment type="cofactor">
    <cofactor evidence="1">
        <name>Mg(2+)</name>
        <dbReference type="ChEBI" id="CHEBI:18420"/>
    </cofactor>
    <text evidence="1">Binds 2 divalent ions per subunit.</text>
</comment>
<comment type="cofactor">
    <cofactor evidence="1">
        <name>K(+)</name>
        <dbReference type="ChEBI" id="CHEBI:29103"/>
    </cofactor>
    <text evidence="1">Binds 1 potassium ion per subunit.</text>
</comment>
<comment type="pathway">
    <text evidence="1">Amino-acid biosynthesis; S-adenosyl-L-methionine biosynthesis; S-adenosyl-L-methionine from L-methionine: step 1/1.</text>
</comment>
<comment type="subunit">
    <text evidence="1">Homotetramer; dimer of dimers.</text>
</comment>
<comment type="subcellular location">
    <subcellularLocation>
        <location evidence="1">Cytoplasm</location>
    </subcellularLocation>
</comment>
<comment type="similarity">
    <text evidence="1">Belongs to the AdoMet synthase family.</text>
</comment>
<organism>
    <name type="scientific">Shewanella baltica (strain OS223)</name>
    <dbReference type="NCBI Taxonomy" id="407976"/>
    <lineage>
        <taxon>Bacteria</taxon>
        <taxon>Pseudomonadati</taxon>
        <taxon>Pseudomonadota</taxon>
        <taxon>Gammaproteobacteria</taxon>
        <taxon>Alteromonadales</taxon>
        <taxon>Shewanellaceae</taxon>
        <taxon>Shewanella</taxon>
    </lineage>
</organism>
<sequence>MAKHLFTSESVSEGHPDKIADQISDAVLDAILAQDPKARVACETYVKTGMVLVGGEVTTSAWVDIEEITRKTVREIGYTHSDMGFDADSCAVLNAIGKQSPDINQGVDRADPAEQGAGDQGLMFGYANNETDVLMPAPITYAHALVKRQSEVRKNGTLPWLRPDAKSQVTFAYDDGKIVGIDAVVLSTQHRDDVSQADLIEGVMETIIKPVLPAQWLNKDTKFFINPTGRFVIGGPVGDCGLTGRKIIVDTYGGMARHGGGAFSGKDPSKVDRSAAYAARYVAKNIVAAGLADRCEIQVSYAIGVAEPTSISIETFGTGKVSEDLLIKLVRQHFELRPYGLTAMLDLARPIYQATAAYGHFGRNEFPWEATDKAEALRADAGL</sequence>
<reference key="1">
    <citation type="submission" date="2008-12" db="EMBL/GenBank/DDBJ databases">
        <title>Complete sequence of chromosome of Shewanella baltica OS223.</title>
        <authorList>
            <consortium name="US DOE Joint Genome Institute"/>
            <person name="Lucas S."/>
            <person name="Copeland A."/>
            <person name="Lapidus A."/>
            <person name="Glavina del Rio T."/>
            <person name="Dalin E."/>
            <person name="Tice H."/>
            <person name="Bruce D."/>
            <person name="Goodwin L."/>
            <person name="Pitluck S."/>
            <person name="Chertkov O."/>
            <person name="Meincke L."/>
            <person name="Brettin T."/>
            <person name="Detter J.C."/>
            <person name="Han C."/>
            <person name="Kuske C.R."/>
            <person name="Larimer F."/>
            <person name="Land M."/>
            <person name="Hauser L."/>
            <person name="Kyrpides N."/>
            <person name="Ovchinnikova G."/>
            <person name="Brettar I."/>
            <person name="Rodrigues J."/>
            <person name="Konstantinidis K."/>
            <person name="Tiedje J."/>
        </authorList>
    </citation>
    <scope>NUCLEOTIDE SEQUENCE [LARGE SCALE GENOMIC DNA]</scope>
    <source>
        <strain>OS223</strain>
    </source>
</reference>
<gene>
    <name evidence="1" type="primary">metK</name>
    <name type="ordered locus">Sbal223_3466</name>
</gene>
<feature type="chain" id="PRO_1000196724" description="S-adenosylmethionine synthase">
    <location>
        <begin position="1"/>
        <end position="383"/>
    </location>
</feature>
<feature type="region of interest" description="Flexible loop" evidence="1">
    <location>
        <begin position="99"/>
        <end position="109"/>
    </location>
</feature>
<feature type="binding site" description="in other chain" evidence="1">
    <location>
        <position position="15"/>
    </location>
    <ligand>
        <name>ATP</name>
        <dbReference type="ChEBI" id="CHEBI:30616"/>
        <note>ligand shared between two neighboring subunits</note>
    </ligand>
</feature>
<feature type="binding site" evidence="1">
    <location>
        <position position="17"/>
    </location>
    <ligand>
        <name>Mg(2+)</name>
        <dbReference type="ChEBI" id="CHEBI:18420"/>
    </ligand>
</feature>
<feature type="binding site" evidence="1">
    <location>
        <position position="43"/>
    </location>
    <ligand>
        <name>K(+)</name>
        <dbReference type="ChEBI" id="CHEBI:29103"/>
    </ligand>
</feature>
<feature type="binding site" description="in other chain" evidence="1">
    <location>
        <position position="56"/>
    </location>
    <ligand>
        <name>L-methionine</name>
        <dbReference type="ChEBI" id="CHEBI:57844"/>
        <note>ligand shared between two neighboring subunits</note>
    </ligand>
</feature>
<feature type="binding site" description="in other chain" evidence="1">
    <location>
        <position position="99"/>
    </location>
    <ligand>
        <name>L-methionine</name>
        <dbReference type="ChEBI" id="CHEBI:57844"/>
        <note>ligand shared between two neighboring subunits</note>
    </ligand>
</feature>
<feature type="binding site" description="in other chain" evidence="1">
    <location>
        <begin position="164"/>
        <end position="166"/>
    </location>
    <ligand>
        <name>ATP</name>
        <dbReference type="ChEBI" id="CHEBI:30616"/>
        <note>ligand shared between two neighboring subunits</note>
    </ligand>
</feature>
<feature type="binding site" description="in other chain" evidence="1">
    <location>
        <begin position="230"/>
        <end position="231"/>
    </location>
    <ligand>
        <name>ATP</name>
        <dbReference type="ChEBI" id="CHEBI:30616"/>
        <note>ligand shared between two neighboring subunits</note>
    </ligand>
</feature>
<feature type="binding site" evidence="1">
    <location>
        <position position="239"/>
    </location>
    <ligand>
        <name>ATP</name>
        <dbReference type="ChEBI" id="CHEBI:30616"/>
        <note>ligand shared between two neighboring subunits</note>
    </ligand>
</feature>
<feature type="binding site" evidence="1">
    <location>
        <position position="239"/>
    </location>
    <ligand>
        <name>L-methionine</name>
        <dbReference type="ChEBI" id="CHEBI:57844"/>
        <note>ligand shared between two neighboring subunits</note>
    </ligand>
</feature>
<feature type="binding site" description="in other chain" evidence="1">
    <location>
        <begin position="245"/>
        <end position="246"/>
    </location>
    <ligand>
        <name>ATP</name>
        <dbReference type="ChEBI" id="CHEBI:30616"/>
        <note>ligand shared between two neighboring subunits</note>
    </ligand>
</feature>
<feature type="binding site" evidence="1">
    <location>
        <position position="262"/>
    </location>
    <ligand>
        <name>ATP</name>
        <dbReference type="ChEBI" id="CHEBI:30616"/>
        <note>ligand shared between two neighboring subunits</note>
    </ligand>
</feature>
<feature type="binding site" evidence="1">
    <location>
        <position position="266"/>
    </location>
    <ligand>
        <name>ATP</name>
        <dbReference type="ChEBI" id="CHEBI:30616"/>
        <note>ligand shared between two neighboring subunits</note>
    </ligand>
</feature>
<feature type="binding site" description="in other chain" evidence="1">
    <location>
        <position position="270"/>
    </location>
    <ligand>
        <name>L-methionine</name>
        <dbReference type="ChEBI" id="CHEBI:57844"/>
        <note>ligand shared between two neighboring subunits</note>
    </ligand>
</feature>
<protein>
    <recommendedName>
        <fullName evidence="1">S-adenosylmethionine synthase</fullName>
        <shortName evidence="1">AdoMet synthase</shortName>
        <ecNumber evidence="1">2.5.1.6</ecNumber>
    </recommendedName>
    <alternativeName>
        <fullName evidence="1">MAT</fullName>
    </alternativeName>
    <alternativeName>
        <fullName evidence="1">Methionine adenosyltransferase</fullName>
    </alternativeName>
</protein>
<evidence type="ECO:0000255" key="1">
    <source>
        <dbReference type="HAMAP-Rule" id="MF_00086"/>
    </source>
</evidence>
<name>METK_SHEB2</name>
<dbReference type="EC" id="2.5.1.6" evidence="1"/>
<dbReference type="EMBL" id="CP001252">
    <property type="protein sequence ID" value="ACK47950.1"/>
    <property type="molecule type" value="Genomic_DNA"/>
</dbReference>
<dbReference type="RefSeq" id="WP_006080333.1">
    <property type="nucleotide sequence ID" value="NC_011663.1"/>
</dbReference>
<dbReference type="SMR" id="B8E5U7"/>
<dbReference type="GeneID" id="11774964"/>
<dbReference type="KEGG" id="sbp:Sbal223_3466"/>
<dbReference type="HOGENOM" id="CLU_041802_1_1_6"/>
<dbReference type="UniPathway" id="UPA00315">
    <property type="reaction ID" value="UER00080"/>
</dbReference>
<dbReference type="Proteomes" id="UP000002507">
    <property type="component" value="Chromosome"/>
</dbReference>
<dbReference type="GO" id="GO:0005737">
    <property type="term" value="C:cytoplasm"/>
    <property type="evidence" value="ECO:0007669"/>
    <property type="project" value="UniProtKB-SubCell"/>
</dbReference>
<dbReference type="GO" id="GO:0005524">
    <property type="term" value="F:ATP binding"/>
    <property type="evidence" value="ECO:0007669"/>
    <property type="project" value="UniProtKB-UniRule"/>
</dbReference>
<dbReference type="GO" id="GO:0000287">
    <property type="term" value="F:magnesium ion binding"/>
    <property type="evidence" value="ECO:0007669"/>
    <property type="project" value="UniProtKB-UniRule"/>
</dbReference>
<dbReference type="GO" id="GO:0004478">
    <property type="term" value="F:methionine adenosyltransferase activity"/>
    <property type="evidence" value="ECO:0007669"/>
    <property type="project" value="UniProtKB-UniRule"/>
</dbReference>
<dbReference type="GO" id="GO:0006730">
    <property type="term" value="P:one-carbon metabolic process"/>
    <property type="evidence" value="ECO:0007669"/>
    <property type="project" value="UniProtKB-KW"/>
</dbReference>
<dbReference type="GO" id="GO:0006556">
    <property type="term" value="P:S-adenosylmethionine biosynthetic process"/>
    <property type="evidence" value="ECO:0007669"/>
    <property type="project" value="UniProtKB-UniRule"/>
</dbReference>
<dbReference type="CDD" id="cd18079">
    <property type="entry name" value="S-AdoMet_synt"/>
    <property type="match status" value="1"/>
</dbReference>
<dbReference type="FunFam" id="3.30.300.10:FF:000001">
    <property type="entry name" value="S-adenosylmethionine synthase"/>
    <property type="match status" value="1"/>
</dbReference>
<dbReference type="FunFam" id="3.30.300.10:FF:000003">
    <property type="entry name" value="S-adenosylmethionine synthase"/>
    <property type="match status" value="1"/>
</dbReference>
<dbReference type="FunFam" id="3.30.300.10:FF:000004">
    <property type="entry name" value="S-adenosylmethionine synthase"/>
    <property type="match status" value="1"/>
</dbReference>
<dbReference type="Gene3D" id="3.30.300.10">
    <property type="match status" value="3"/>
</dbReference>
<dbReference type="HAMAP" id="MF_00086">
    <property type="entry name" value="S_AdoMet_synth1"/>
    <property type="match status" value="1"/>
</dbReference>
<dbReference type="InterPro" id="IPR022631">
    <property type="entry name" value="ADOMET_SYNTHASE_CS"/>
</dbReference>
<dbReference type="InterPro" id="IPR022630">
    <property type="entry name" value="S-AdoMet_synt_C"/>
</dbReference>
<dbReference type="InterPro" id="IPR022629">
    <property type="entry name" value="S-AdoMet_synt_central"/>
</dbReference>
<dbReference type="InterPro" id="IPR022628">
    <property type="entry name" value="S-AdoMet_synt_N"/>
</dbReference>
<dbReference type="InterPro" id="IPR002133">
    <property type="entry name" value="S-AdoMet_synthetase"/>
</dbReference>
<dbReference type="InterPro" id="IPR022636">
    <property type="entry name" value="S-AdoMet_synthetase_sfam"/>
</dbReference>
<dbReference type="NCBIfam" id="TIGR01034">
    <property type="entry name" value="metK"/>
    <property type="match status" value="1"/>
</dbReference>
<dbReference type="PANTHER" id="PTHR11964">
    <property type="entry name" value="S-ADENOSYLMETHIONINE SYNTHETASE"/>
    <property type="match status" value="1"/>
</dbReference>
<dbReference type="Pfam" id="PF02773">
    <property type="entry name" value="S-AdoMet_synt_C"/>
    <property type="match status" value="1"/>
</dbReference>
<dbReference type="Pfam" id="PF02772">
    <property type="entry name" value="S-AdoMet_synt_M"/>
    <property type="match status" value="1"/>
</dbReference>
<dbReference type="Pfam" id="PF00438">
    <property type="entry name" value="S-AdoMet_synt_N"/>
    <property type="match status" value="1"/>
</dbReference>
<dbReference type="PIRSF" id="PIRSF000497">
    <property type="entry name" value="MAT"/>
    <property type="match status" value="1"/>
</dbReference>
<dbReference type="SUPFAM" id="SSF55973">
    <property type="entry name" value="S-adenosylmethionine synthetase"/>
    <property type="match status" value="3"/>
</dbReference>
<dbReference type="PROSITE" id="PS00376">
    <property type="entry name" value="ADOMET_SYNTHASE_1"/>
    <property type="match status" value="1"/>
</dbReference>
<dbReference type="PROSITE" id="PS00377">
    <property type="entry name" value="ADOMET_SYNTHASE_2"/>
    <property type="match status" value="1"/>
</dbReference>
<keyword id="KW-0067">ATP-binding</keyword>
<keyword id="KW-0963">Cytoplasm</keyword>
<keyword id="KW-0460">Magnesium</keyword>
<keyword id="KW-0479">Metal-binding</keyword>
<keyword id="KW-0547">Nucleotide-binding</keyword>
<keyword id="KW-0554">One-carbon metabolism</keyword>
<keyword id="KW-0630">Potassium</keyword>
<keyword id="KW-0808">Transferase</keyword>
<accession>B8E5U7</accession>